<reference key="1">
    <citation type="journal article" date="1998" name="DNA Res.">
        <title>Complete sequence and gene organization of the genome of a hyper-thermophilic archaebacterium, Pyrococcus horikoshii OT3.</title>
        <authorList>
            <person name="Kawarabayasi Y."/>
            <person name="Sawada M."/>
            <person name="Horikawa H."/>
            <person name="Haikawa Y."/>
            <person name="Hino Y."/>
            <person name="Yamamoto S."/>
            <person name="Sekine M."/>
            <person name="Baba S."/>
            <person name="Kosugi H."/>
            <person name="Hosoyama A."/>
            <person name="Nagai Y."/>
            <person name="Sakai M."/>
            <person name="Ogura K."/>
            <person name="Otsuka R."/>
            <person name="Nakazawa H."/>
            <person name="Takamiya M."/>
            <person name="Ohfuku Y."/>
            <person name="Funahashi T."/>
            <person name="Tanaka T."/>
            <person name="Kudoh Y."/>
            <person name="Yamazaki J."/>
            <person name="Kushida N."/>
            <person name="Oguchi A."/>
            <person name="Aoki K."/>
            <person name="Yoshizawa T."/>
            <person name="Nakamura Y."/>
            <person name="Robb F.T."/>
            <person name="Horikoshi K."/>
            <person name="Masuchi Y."/>
            <person name="Shizuya H."/>
            <person name="Kikuchi H."/>
        </authorList>
    </citation>
    <scope>NUCLEOTIDE SEQUENCE [LARGE SCALE GENOMIC DNA]</scope>
    <source>
        <strain>ATCC 700860 / DSM 12428 / JCM 9974 / NBRC 100139 / OT-3</strain>
    </source>
</reference>
<name>RS6E_PYRHO</name>
<proteinExistence type="inferred from homology"/>
<comment type="similarity">
    <text evidence="1">Belongs to the eukaryotic ribosomal protein eS6 family.</text>
</comment>
<dbReference type="EMBL" id="BA000001">
    <property type="protein sequence ID" value="BAA29704.1"/>
    <property type="molecule type" value="Genomic_DNA"/>
</dbReference>
<dbReference type="PIR" id="F71105">
    <property type="entry name" value="F71105"/>
</dbReference>
<dbReference type="RefSeq" id="WP_010884714.1">
    <property type="nucleotide sequence ID" value="NC_000961.1"/>
</dbReference>
<dbReference type="SMR" id="O58349"/>
<dbReference type="STRING" id="70601.gene:9377556"/>
<dbReference type="EnsemblBacteria" id="BAA29704">
    <property type="protein sequence ID" value="BAA29704"/>
    <property type="gene ID" value="BAA29704"/>
</dbReference>
<dbReference type="GeneID" id="1442948"/>
<dbReference type="KEGG" id="pho:PH0615"/>
<dbReference type="eggNOG" id="arCOG01946">
    <property type="taxonomic scope" value="Archaea"/>
</dbReference>
<dbReference type="OrthoDB" id="7793at2157"/>
<dbReference type="Proteomes" id="UP000000752">
    <property type="component" value="Chromosome"/>
</dbReference>
<dbReference type="GO" id="GO:1990904">
    <property type="term" value="C:ribonucleoprotein complex"/>
    <property type="evidence" value="ECO:0007669"/>
    <property type="project" value="UniProtKB-KW"/>
</dbReference>
<dbReference type="GO" id="GO:0005840">
    <property type="term" value="C:ribosome"/>
    <property type="evidence" value="ECO:0007669"/>
    <property type="project" value="UniProtKB-KW"/>
</dbReference>
<dbReference type="GO" id="GO:0003735">
    <property type="term" value="F:structural constituent of ribosome"/>
    <property type="evidence" value="ECO:0007669"/>
    <property type="project" value="InterPro"/>
</dbReference>
<dbReference type="GO" id="GO:0006412">
    <property type="term" value="P:translation"/>
    <property type="evidence" value="ECO:0007669"/>
    <property type="project" value="UniProtKB-UniRule"/>
</dbReference>
<dbReference type="HAMAP" id="MF_00512">
    <property type="entry name" value="Ribosomal_eS6"/>
    <property type="match status" value="1"/>
</dbReference>
<dbReference type="InterPro" id="IPR001377">
    <property type="entry name" value="Ribosomal_eS6"/>
</dbReference>
<dbReference type="InterPro" id="IPR020924">
    <property type="entry name" value="Ribosomal_eS6_arc"/>
</dbReference>
<dbReference type="InterPro" id="IPR018282">
    <property type="entry name" value="Ribosomal_eS6_CS"/>
</dbReference>
<dbReference type="NCBIfam" id="NF003293">
    <property type="entry name" value="PRK04290.1-2"/>
    <property type="match status" value="1"/>
</dbReference>
<dbReference type="NCBIfam" id="NF003294">
    <property type="entry name" value="PRK04290.1-3"/>
    <property type="match status" value="1"/>
</dbReference>
<dbReference type="PANTHER" id="PTHR11502">
    <property type="entry name" value="40S RIBOSOMAL PROTEIN S6"/>
    <property type="match status" value="1"/>
</dbReference>
<dbReference type="Pfam" id="PF01092">
    <property type="entry name" value="Ribosomal_S6e"/>
    <property type="match status" value="1"/>
</dbReference>
<dbReference type="SMART" id="SM01405">
    <property type="entry name" value="Ribosomal_S6e"/>
    <property type="match status" value="1"/>
</dbReference>
<dbReference type="PROSITE" id="PS00578">
    <property type="entry name" value="RIBOSOMAL_S6E"/>
    <property type="match status" value="1"/>
</dbReference>
<sequence length="125" mass="13879">MTTFKLVISDPKSGIAKQIEISGANAEKLIGKKIGDQIPVKELGLDLKALFGKDFPEDVKMEIRGGTDKDGFPMRPDIHGPRRVRILLSKGPGFRPKEKGERRKKTVRGNTISPEIVQVNVKLVY</sequence>
<organism>
    <name type="scientific">Pyrococcus horikoshii (strain ATCC 700860 / DSM 12428 / JCM 9974 / NBRC 100139 / OT-3)</name>
    <dbReference type="NCBI Taxonomy" id="70601"/>
    <lineage>
        <taxon>Archaea</taxon>
        <taxon>Methanobacteriati</taxon>
        <taxon>Methanobacteriota</taxon>
        <taxon>Thermococci</taxon>
        <taxon>Thermococcales</taxon>
        <taxon>Thermococcaceae</taxon>
        <taxon>Pyrococcus</taxon>
    </lineage>
</organism>
<gene>
    <name evidence="1" type="primary">rps6e</name>
    <name type="ordered locus">PH0615</name>
</gene>
<accession>O58349</accession>
<evidence type="ECO:0000255" key="1">
    <source>
        <dbReference type="HAMAP-Rule" id="MF_00512"/>
    </source>
</evidence>
<evidence type="ECO:0000305" key="2"/>
<keyword id="KW-0687">Ribonucleoprotein</keyword>
<keyword id="KW-0689">Ribosomal protein</keyword>
<feature type="chain" id="PRO_0000137358" description="Small ribosomal subunit protein eS6">
    <location>
        <begin position="1"/>
        <end position="125"/>
    </location>
</feature>
<protein>
    <recommendedName>
        <fullName evidence="1">Small ribosomal subunit protein eS6</fullName>
    </recommendedName>
    <alternativeName>
        <fullName evidence="2">30S ribosomal protein S6e</fullName>
    </alternativeName>
</protein>